<comment type="similarity">
    <text evidence="1">Belongs to the bacterial ribosomal protein bL33 family.</text>
</comment>
<evidence type="ECO:0000305" key="1"/>
<organism>
    <name type="scientific">Vibrio cholerae serotype O1 (strain ATCC 39315 / El Tor Inaba N16961)</name>
    <dbReference type="NCBI Taxonomy" id="243277"/>
    <lineage>
        <taxon>Bacteria</taxon>
        <taxon>Pseudomonadati</taxon>
        <taxon>Pseudomonadota</taxon>
        <taxon>Gammaproteobacteria</taxon>
        <taxon>Vibrionales</taxon>
        <taxon>Vibrionaceae</taxon>
        <taxon>Vibrio</taxon>
    </lineage>
</organism>
<name>RL33_VIBCH</name>
<proteinExistence type="inferred from homology"/>
<gene>
    <name type="primary">rpmG</name>
    <name type="ordered locus">VC_0219</name>
</gene>
<dbReference type="EMBL" id="AE003852">
    <property type="protein sequence ID" value="AAF93395.1"/>
    <property type="molecule type" value="Genomic_DNA"/>
</dbReference>
<dbReference type="PIR" id="E82347">
    <property type="entry name" value="E82347"/>
</dbReference>
<dbReference type="RefSeq" id="NP_229876.1">
    <property type="nucleotide sequence ID" value="NC_002505.1"/>
</dbReference>
<dbReference type="RefSeq" id="WP_001051801.1">
    <property type="nucleotide sequence ID" value="NZ_LT906614.1"/>
</dbReference>
<dbReference type="SMR" id="Q9KVC7"/>
<dbReference type="STRING" id="243277.VC_0219"/>
<dbReference type="DNASU" id="2614279"/>
<dbReference type="EnsemblBacteria" id="AAF93395">
    <property type="protein sequence ID" value="AAF93395"/>
    <property type="gene ID" value="VC_0219"/>
</dbReference>
<dbReference type="GeneID" id="93953789"/>
<dbReference type="KEGG" id="vch:VC_0219"/>
<dbReference type="PATRIC" id="fig|243277.26.peg.201"/>
<dbReference type="eggNOG" id="COG0267">
    <property type="taxonomic scope" value="Bacteria"/>
</dbReference>
<dbReference type="HOGENOM" id="CLU_190949_1_1_6"/>
<dbReference type="Proteomes" id="UP000000584">
    <property type="component" value="Chromosome 1"/>
</dbReference>
<dbReference type="GO" id="GO:0022625">
    <property type="term" value="C:cytosolic large ribosomal subunit"/>
    <property type="evidence" value="ECO:0000318"/>
    <property type="project" value="GO_Central"/>
</dbReference>
<dbReference type="GO" id="GO:0003735">
    <property type="term" value="F:structural constituent of ribosome"/>
    <property type="evidence" value="ECO:0000318"/>
    <property type="project" value="GO_Central"/>
</dbReference>
<dbReference type="GO" id="GO:0006412">
    <property type="term" value="P:translation"/>
    <property type="evidence" value="ECO:0007669"/>
    <property type="project" value="UniProtKB-UniRule"/>
</dbReference>
<dbReference type="FunFam" id="2.20.28.120:FF:000001">
    <property type="entry name" value="50S ribosomal protein L33"/>
    <property type="match status" value="1"/>
</dbReference>
<dbReference type="Gene3D" id="2.20.28.120">
    <property type="entry name" value="Ribosomal protein L33"/>
    <property type="match status" value="1"/>
</dbReference>
<dbReference type="HAMAP" id="MF_00294">
    <property type="entry name" value="Ribosomal_bL33"/>
    <property type="match status" value="1"/>
</dbReference>
<dbReference type="InterPro" id="IPR001705">
    <property type="entry name" value="Ribosomal_bL33"/>
</dbReference>
<dbReference type="InterPro" id="IPR018264">
    <property type="entry name" value="Ribosomal_bL33_CS"/>
</dbReference>
<dbReference type="InterPro" id="IPR038584">
    <property type="entry name" value="Ribosomal_bL33_sf"/>
</dbReference>
<dbReference type="InterPro" id="IPR011332">
    <property type="entry name" value="Ribosomal_zn-bd"/>
</dbReference>
<dbReference type="NCBIfam" id="NF001860">
    <property type="entry name" value="PRK00595.1"/>
    <property type="match status" value="1"/>
</dbReference>
<dbReference type="NCBIfam" id="TIGR01023">
    <property type="entry name" value="rpmG_bact"/>
    <property type="match status" value="1"/>
</dbReference>
<dbReference type="PANTHER" id="PTHR15238">
    <property type="entry name" value="54S RIBOSOMAL PROTEIN L39, MITOCHONDRIAL"/>
    <property type="match status" value="1"/>
</dbReference>
<dbReference type="PANTHER" id="PTHR15238:SF1">
    <property type="entry name" value="LARGE RIBOSOMAL SUBUNIT PROTEIN BL33M"/>
    <property type="match status" value="1"/>
</dbReference>
<dbReference type="Pfam" id="PF00471">
    <property type="entry name" value="Ribosomal_L33"/>
    <property type="match status" value="1"/>
</dbReference>
<dbReference type="SUPFAM" id="SSF57829">
    <property type="entry name" value="Zn-binding ribosomal proteins"/>
    <property type="match status" value="1"/>
</dbReference>
<dbReference type="PROSITE" id="PS00582">
    <property type="entry name" value="RIBOSOMAL_L33"/>
    <property type="match status" value="1"/>
</dbReference>
<reference key="1">
    <citation type="journal article" date="2000" name="Nature">
        <title>DNA sequence of both chromosomes of the cholera pathogen Vibrio cholerae.</title>
        <authorList>
            <person name="Heidelberg J.F."/>
            <person name="Eisen J.A."/>
            <person name="Nelson W.C."/>
            <person name="Clayton R.A."/>
            <person name="Gwinn M.L."/>
            <person name="Dodson R.J."/>
            <person name="Haft D.H."/>
            <person name="Hickey E.K."/>
            <person name="Peterson J.D."/>
            <person name="Umayam L.A."/>
            <person name="Gill S.R."/>
            <person name="Nelson K.E."/>
            <person name="Read T.D."/>
            <person name="Tettelin H."/>
            <person name="Richardson D.L."/>
            <person name="Ermolaeva M.D."/>
            <person name="Vamathevan J.J."/>
            <person name="Bass S."/>
            <person name="Qin H."/>
            <person name="Dragoi I."/>
            <person name="Sellers P."/>
            <person name="McDonald L.A."/>
            <person name="Utterback T.R."/>
            <person name="Fleischmann R.D."/>
            <person name="Nierman W.C."/>
            <person name="White O."/>
            <person name="Salzberg S.L."/>
            <person name="Smith H.O."/>
            <person name="Colwell R.R."/>
            <person name="Mekalanos J.J."/>
            <person name="Venter J.C."/>
            <person name="Fraser C.M."/>
        </authorList>
    </citation>
    <scope>NUCLEOTIDE SEQUENCE [LARGE SCALE GENOMIC DNA]</scope>
    <source>
        <strain>ATCC 39315 / El Tor Inaba N16961</strain>
    </source>
</reference>
<accession>Q9KVC7</accession>
<sequence>MAKGIREKIRLVSSAGTGHFYTTDKNKRNMPGKFEIKKYDPVVRQHVVYKEAKIK</sequence>
<protein>
    <recommendedName>
        <fullName evidence="1">Large ribosomal subunit protein bL33</fullName>
    </recommendedName>
    <alternativeName>
        <fullName>50S ribosomal protein L33</fullName>
    </alternativeName>
</protein>
<keyword id="KW-1185">Reference proteome</keyword>
<keyword id="KW-0687">Ribonucleoprotein</keyword>
<keyword id="KW-0689">Ribosomal protein</keyword>
<feature type="chain" id="PRO_0000170261" description="Large ribosomal subunit protein bL33">
    <location>
        <begin position="1"/>
        <end position="55"/>
    </location>
</feature>